<name>PHEA_MYCBO</name>
<organism>
    <name type="scientific">Mycobacterium bovis (strain ATCC BAA-935 / AF2122/97)</name>
    <dbReference type="NCBI Taxonomy" id="233413"/>
    <lineage>
        <taxon>Bacteria</taxon>
        <taxon>Bacillati</taxon>
        <taxon>Actinomycetota</taxon>
        <taxon>Actinomycetes</taxon>
        <taxon>Mycobacteriales</taxon>
        <taxon>Mycobacteriaceae</taxon>
        <taxon>Mycobacterium</taxon>
        <taxon>Mycobacterium tuberculosis complex</taxon>
    </lineage>
</organism>
<keyword id="KW-0028">Amino-acid biosynthesis</keyword>
<keyword id="KW-0057">Aromatic amino acid biosynthesis</keyword>
<keyword id="KW-0456">Lyase</keyword>
<keyword id="KW-0584">Phenylalanine biosynthesis</keyword>
<keyword id="KW-1185">Reference proteome</keyword>
<gene>
    <name type="primary">pheA</name>
    <name type="ordered locus">BQ2027_MB3868C</name>
</gene>
<accession>Q7TVJ6</accession>
<accession>A0A1R3Y5E0</accession>
<accession>X2BPX4</accession>
<feature type="chain" id="PRO_0000382032" description="Prephenate dehydratase">
    <location>
        <begin position="1"/>
        <end position="321"/>
    </location>
</feature>
<feature type="domain" description="Prephenate dehydratase" evidence="2">
    <location>
        <begin position="3"/>
        <end position="189"/>
    </location>
</feature>
<feature type="domain" description="ACT" evidence="3">
    <location>
        <begin position="203"/>
        <end position="280"/>
    </location>
</feature>
<feature type="site" description="Essential for activity" evidence="1">
    <location>
        <position position="182"/>
    </location>
</feature>
<dbReference type="EC" id="4.2.1.51"/>
<dbReference type="EMBL" id="LT708304">
    <property type="protein sequence ID" value="SIU02497.1"/>
    <property type="molecule type" value="Genomic_DNA"/>
</dbReference>
<dbReference type="RefSeq" id="NP_857505.1">
    <property type="nucleotide sequence ID" value="NC_002945.3"/>
</dbReference>
<dbReference type="RefSeq" id="WP_003420906.1">
    <property type="nucleotide sequence ID" value="NC_002945.4"/>
</dbReference>
<dbReference type="SMR" id="Q7TVJ6"/>
<dbReference type="KEGG" id="mbo:BQ2027_MB3868C"/>
<dbReference type="PATRIC" id="fig|233413.5.peg.4230"/>
<dbReference type="UniPathway" id="UPA00121">
    <property type="reaction ID" value="UER00345"/>
</dbReference>
<dbReference type="Proteomes" id="UP000001419">
    <property type="component" value="Chromosome"/>
</dbReference>
<dbReference type="GO" id="GO:0005737">
    <property type="term" value="C:cytoplasm"/>
    <property type="evidence" value="ECO:0007669"/>
    <property type="project" value="TreeGrafter"/>
</dbReference>
<dbReference type="GO" id="GO:0004664">
    <property type="term" value="F:prephenate dehydratase activity"/>
    <property type="evidence" value="ECO:0007669"/>
    <property type="project" value="UniProtKB-EC"/>
</dbReference>
<dbReference type="GO" id="GO:0042803">
    <property type="term" value="F:protein homodimerization activity"/>
    <property type="evidence" value="ECO:0000250"/>
    <property type="project" value="UniProtKB"/>
</dbReference>
<dbReference type="GO" id="GO:0009094">
    <property type="term" value="P:L-phenylalanine biosynthetic process"/>
    <property type="evidence" value="ECO:0007669"/>
    <property type="project" value="UniProtKB-UniPathway"/>
</dbReference>
<dbReference type="CDD" id="cd04905">
    <property type="entry name" value="ACT_CM-PDT"/>
    <property type="match status" value="1"/>
</dbReference>
<dbReference type="CDD" id="cd13632">
    <property type="entry name" value="PBP2_Aa-PDT_like"/>
    <property type="match status" value="1"/>
</dbReference>
<dbReference type="FunFam" id="3.30.70.260:FF:000012">
    <property type="entry name" value="Prephenate dehydratase"/>
    <property type="match status" value="1"/>
</dbReference>
<dbReference type="FunFam" id="3.40.190.10:FF:000064">
    <property type="entry name" value="Prephenate dehydratase"/>
    <property type="match status" value="1"/>
</dbReference>
<dbReference type="FunFam" id="3.40.190.10:FF:000146">
    <property type="entry name" value="Prephenate dehydratase"/>
    <property type="match status" value="1"/>
</dbReference>
<dbReference type="Gene3D" id="3.30.70.260">
    <property type="match status" value="1"/>
</dbReference>
<dbReference type="Gene3D" id="3.40.190.10">
    <property type="entry name" value="Periplasmic binding protein-like II"/>
    <property type="match status" value="2"/>
</dbReference>
<dbReference type="InterPro" id="IPR045865">
    <property type="entry name" value="ACT-like_dom_sf"/>
</dbReference>
<dbReference type="InterPro" id="IPR002912">
    <property type="entry name" value="ACT_dom"/>
</dbReference>
<dbReference type="InterPro" id="IPR008242">
    <property type="entry name" value="Chor_mutase/pphenate_deHydtase"/>
</dbReference>
<dbReference type="InterPro" id="IPR001086">
    <property type="entry name" value="Preph_deHydtase"/>
</dbReference>
<dbReference type="InterPro" id="IPR018528">
    <property type="entry name" value="Preph_deHydtase_CS"/>
</dbReference>
<dbReference type="NCBIfam" id="NF008865">
    <property type="entry name" value="PRK11898.1"/>
    <property type="match status" value="1"/>
</dbReference>
<dbReference type="PANTHER" id="PTHR21022">
    <property type="entry name" value="PREPHENATE DEHYDRATASE P PROTEIN"/>
    <property type="match status" value="1"/>
</dbReference>
<dbReference type="PANTHER" id="PTHR21022:SF19">
    <property type="entry name" value="PREPHENATE DEHYDRATASE-RELATED"/>
    <property type="match status" value="1"/>
</dbReference>
<dbReference type="Pfam" id="PF01842">
    <property type="entry name" value="ACT"/>
    <property type="match status" value="1"/>
</dbReference>
<dbReference type="Pfam" id="PF00800">
    <property type="entry name" value="PDT"/>
    <property type="match status" value="1"/>
</dbReference>
<dbReference type="PIRSF" id="PIRSF001500">
    <property type="entry name" value="Chor_mut_pdt_Ppr"/>
    <property type="match status" value="1"/>
</dbReference>
<dbReference type="SUPFAM" id="SSF55021">
    <property type="entry name" value="ACT-like"/>
    <property type="match status" value="1"/>
</dbReference>
<dbReference type="SUPFAM" id="SSF53850">
    <property type="entry name" value="Periplasmic binding protein-like II"/>
    <property type="match status" value="1"/>
</dbReference>
<dbReference type="PROSITE" id="PS51671">
    <property type="entry name" value="ACT"/>
    <property type="match status" value="1"/>
</dbReference>
<dbReference type="PROSITE" id="PS00858">
    <property type="entry name" value="PREPHENATE_DEHYDR_2"/>
    <property type="match status" value="1"/>
</dbReference>
<dbReference type="PROSITE" id="PS51171">
    <property type="entry name" value="PREPHENATE_DEHYDR_3"/>
    <property type="match status" value="1"/>
</dbReference>
<comment type="catalytic activity">
    <reaction>
        <text>prephenate + H(+) = 3-phenylpyruvate + CO2 + H2O</text>
        <dbReference type="Rhea" id="RHEA:21648"/>
        <dbReference type="ChEBI" id="CHEBI:15377"/>
        <dbReference type="ChEBI" id="CHEBI:15378"/>
        <dbReference type="ChEBI" id="CHEBI:16526"/>
        <dbReference type="ChEBI" id="CHEBI:18005"/>
        <dbReference type="ChEBI" id="CHEBI:29934"/>
        <dbReference type="EC" id="4.2.1.51"/>
    </reaction>
</comment>
<comment type="pathway">
    <text>Amino-acid biosynthesis; L-phenylalanine biosynthesis; phenylpyruvate from prephenate: step 1/1.</text>
</comment>
<comment type="subunit">
    <text evidence="1">Homodimer.</text>
</comment>
<comment type="induction">
    <text evidence="4">Induced in response to the thiol oxidant diamide.</text>
</comment>
<reference key="1">
    <citation type="journal article" date="2003" name="Proc. Natl. Acad. Sci. U.S.A.">
        <title>The complete genome sequence of Mycobacterium bovis.</title>
        <authorList>
            <person name="Garnier T."/>
            <person name="Eiglmeier K."/>
            <person name="Camus J.-C."/>
            <person name="Medina N."/>
            <person name="Mansoor H."/>
            <person name="Pryor M."/>
            <person name="Duthoy S."/>
            <person name="Grondin S."/>
            <person name="Lacroix C."/>
            <person name="Monsempe C."/>
            <person name="Simon S."/>
            <person name="Harris B."/>
            <person name="Atkin R."/>
            <person name="Doggett J."/>
            <person name="Mayes R."/>
            <person name="Keating L."/>
            <person name="Wheeler P.R."/>
            <person name="Parkhill J."/>
            <person name="Barrell B.G."/>
            <person name="Cole S.T."/>
            <person name="Gordon S.V."/>
            <person name="Hewinson R.G."/>
        </authorList>
    </citation>
    <scope>NUCLEOTIDE SEQUENCE [LARGE SCALE GENOMIC DNA]</scope>
    <source>
        <strain>ATCC BAA-935 / AF2122/97</strain>
    </source>
</reference>
<reference key="2">
    <citation type="journal article" date="2017" name="Genome Announc.">
        <title>Updated reference genome sequence and annotation of Mycobacterium bovis AF2122/97.</title>
        <authorList>
            <person name="Malone K.M."/>
            <person name="Farrell D."/>
            <person name="Stuber T.P."/>
            <person name="Schubert O.T."/>
            <person name="Aebersold R."/>
            <person name="Robbe-Austerman S."/>
            <person name="Gordon S.V."/>
        </authorList>
    </citation>
    <scope>NUCLEOTIDE SEQUENCE [LARGE SCALE GENOMIC DNA]</scope>
    <scope>GENOME REANNOTATION</scope>
    <source>
        <strain>ATCC BAA-935 / AF2122/97</strain>
    </source>
</reference>
<reference key="3">
    <citation type="journal article" date="2005" name="FEMS Microbiol. Lett.">
        <title>Thiol specific oxidative stress response in Mycobacteria.</title>
        <authorList>
            <person name="Dosanjh N.S."/>
            <person name="Rawat M."/>
            <person name="Chung J.-H."/>
            <person name="Av-Gay Y."/>
        </authorList>
    </citation>
    <scope>IDENTIFICATION BY MASS SPECTROMETRY</scope>
    <scope>INDUCTION</scope>
    <source>
        <strain>BCG / Pasteur</strain>
    </source>
</reference>
<evidence type="ECO:0000250" key="1"/>
<evidence type="ECO:0000255" key="2">
    <source>
        <dbReference type="PROSITE-ProRule" id="PRU00517"/>
    </source>
</evidence>
<evidence type="ECO:0000255" key="3">
    <source>
        <dbReference type="PROSITE-ProRule" id="PRU01007"/>
    </source>
</evidence>
<evidence type="ECO:0000269" key="4">
    <source>
    </source>
</evidence>
<sequence>MVRIAYLGPEGTFTEAALVRMVAAGLVPETGPDALQRMPVESAPAALAAVRDGGADYACVPIENSIDGSVLPTLDSLAIGVRLQVFAETTLDVTFSIVVKPGRNAADVRTLAAFPVAAAQVRQWLAAHLPAADLRPAYSNADAARQVADGLVDAAVTSPLAAARWGLAALADGVVDESNARTRFVLVGRPGPPPARTGADRTSAVLRIDNQPGALVAALAEFGIRGIDLTRIESRPTRTELGTYLFFVDCVGHIDDEAVAEALKAVHRRCADVRYLGSWPTGPAAGAQPPLVDEASRWLARLRAGKPEQTLVRPDDQGAQA</sequence>
<protein>
    <recommendedName>
        <fullName>Prephenate dehydratase</fullName>
        <shortName>PDT</shortName>
        <ecNumber>4.2.1.51</ecNumber>
    </recommendedName>
</protein>
<proteinExistence type="evidence at protein level"/>